<protein>
    <recommendedName>
        <fullName evidence="1">Transcription termination factor FttA</fullName>
        <ecNumber evidence="1 2">3.1.-.-</ecNumber>
    </recommendedName>
    <alternativeName>
        <fullName evidence="3">Pab-aCPSF1</fullName>
    </alternativeName>
</protein>
<keyword id="KW-0238">DNA-binding</keyword>
<keyword id="KW-0255">Endonuclease</keyword>
<keyword id="KW-0269">Exonuclease</keyword>
<keyword id="KW-0378">Hydrolase</keyword>
<keyword id="KW-0479">Metal-binding</keyword>
<keyword id="KW-0540">Nuclease</keyword>
<keyword id="KW-0694">RNA-binding</keyword>
<keyword id="KW-0804">Transcription</keyword>
<keyword id="KW-0805">Transcription regulation</keyword>
<keyword id="KW-0806">Transcription termination</keyword>
<keyword id="KW-0862">Zinc</keyword>
<organism>
    <name type="scientific">Pyrococcus abyssi (strain GE5 / Orsay)</name>
    <dbReference type="NCBI Taxonomy" id="272844"/>
    <lineage>
        <taxon>Archaea</taxon>
        <taxon>Methanobacteriati</taxon>
        <taxon>Methanobacteriota</taxon>
        <taxon>Thermococci</taxon>
        <taxon>Thermococcales</taxon>
        <taxon>Thermococcaceae</taxon>
        <taxon>Pyrococcus</taxon>
    </lineage>
</organism>
<name>FTTA_PYRAB</name>
<dbReference type="EC" id="3.1.-.-" evidence="1 2"/>
<dbReference type="EMBL" id="AJ248285">
    <property type="protein sequence ID" value="CAB49663.1"/>
    <property type="status" value="ALT_INIT"/>
    <property type="molecule type" value="Genomic_DNA"/>
</dbReference>
<dbReference type="EMBL" id="HE613800">
    <property type="protein sequence ID" value="CCE70145.1"/>
    <property type="molecule type" value="Genomic_DNA"/>
</dbReference>
<dbReference type="PIR" id="F75118">
    <property type="entry name" value="F75118"/>
</dbReference>
<dbReference type="RefSeq" id="WP_048146646.1">
    <property type="nucleotide sequence ID" value="NC_000868.1"/>
</dbReference>
<dbReference type="SMR" id="Q9V0P0"/>
<dbReference type="STRING" id="272844.PAB1868"/>
<dbReference type="KEGG" id="pab:PAB1868"/>
<dbReference type="PATRIC" id="fig|272844.11.peg.789"/>
<dbReference type="eggNOG" id="arCOG00543">
    <property type="taxonomic scope" value="Archaea"/>
</dbReference>
<dbReference type="HOGENOM" id="CLU_009673_5_1_2"/>
<dbReference type="OrthoDB" id="7155at2157"/>
<dbReference type="PhylomeDB" id="Q9V0P0"/>
<dbReference type="Proteomes" id="UP000000810">
    <property type="component" value="Chromosome"/>
</dbReference>
<dbReference type="Proteomes" id="UP000009139">
    <property type="component" value="Chromosome"/>
</dbReference>
<dbReference type="GO" id="GO:0003677">
    <property type="term" value="F:DNA binding"/>
    <property type="evidence" value="ECO:0007669"/>
    <property type="project" value="UniProtKB-KW"/>
</dbReference>
<dbReference type="GO" id="GO:0046872">
    <property type="term" value="F:metal ion binding"/>
    <property type="evidence" value="ECO:0007669"/>
    <property type="project" value="UniProtKB-KW"/>
</dbReference>
<dbReference type="GO" id="GO:0003723">
    <property type="term" value="F:RNA binding"/>
    <property type="evidence" value="ECO:0000314"/>
    <property type="project" value="UniProtKB"/>
</dbReference>
<dbReference type="GO" id="GO:0004521">
    <property type="term" value="F:RNA endonuclease activity"/>
    <property type="evidence" value="ECO:0000314"/>
    <property type="project" value="UniProtKB"/>
</dbReference>
<dbReference type="GO" id="GO:0004532">
    <property type="term" value="F:RNA exonuclease activity"/>
    <property type="evidence" value="ECO:0000314"/>
    <property type="project" value="UniProtKB"/>
</dbReference>
<dbReference type="GO" id="GO:0006353">
    <property type="term" value="P:DNA-templated transcription termination"/>
    <property type="evidence" value="ECO:0007669"/>
    <property type="project" value="UniProtKB-KW"/>
</dbReference>
<dbReference type="CDD" id="cd07734">
    <property type="entry name" value="Int9-11_CPSF2-3-like_MBL-fold"/>
    <property type="match status" value="1"/>
</dbReference>
<dbReference type="CDD" id="cd22532">
    <property type="entry name" value="KH-II_CPSF_arch_rpt1"/>
    <property type="match status" value="1"/>
</dbReference>
<dbReference type="CDD" id="cd02410">
    <property type="entry name" value="KH-II_CPSF_arch_rpt2"/>
    <property type="match status" value="1"/>
</dbReference>
<dbReference type="Gene3D" id="3.30.300.20">
    <property type="match status" value="1"/>
</dbReference>
<dbReference type="Gene3D" id="3.30.300.230">
    <property type="match status" value="1"/>
</dbReference>
<dbReference type="Gene3D" id="3.40.50.10890">
    <property type="match status" value="1"/>
</dbReference>
<dbReference type="Gene3D" id="3.60.15.10">
    <property type="entry name" value="Ribonuclease Z/Hydroxyacylglutathione hydrolase-like"/>
    <property type="match status" value="1"/>
</dbReference>
<dbReference type="HAMAP" id="MF_00870">
    <property type="entry name" value="FttA"/>
    <property type="match status" value="1"/>
</dbReference>
<dbReference type="InterPro" id="IPR019975">
    <property type="entry name" value="aCPSF1"/>
</dbReference>
<dbReference type="InterPro" id="IPR022712">
    <property type="entry name" value="Beta_Casp"/>
</dbReference>
<dbReference type="InterPro" id="IPR004087">
    <property type="entry name" value="KH_dom"/>
</dbReference>
<dbReference type="InterPro" id="IPR015946">
    <property type="entry name" value="KH_dom-like_a/b"/>
</dbReference>
<dbReference type="InterPro" id="IPR009019">
    <property type="entry name" value="KH_sf_prok-type"/>
</dbReference>
<dbReference type="InterPro" id="IPR050698">
    <property type="entry name" value="MBL"/>
</dbReference>
<dbReference type="InterPro" id="IPR001279">
    <property type="entry name" value="Metallo-B-lactamas"/>
</dbReference>
<dbReference type="InterPro" id="IPR036866">
    <property type="entry name" value="RibonucZ/Hydroxyglut_hydro"/>
</dbReference>
<dbReference type="InterPro" id="IPR011108">
    <property type="entry name" value="RMMBL"/>
</dbReference>
<dbReference type="InterPro" id="IPR033769">
    <property type="entry name" value="TffA_KH"/>
</dbReference>
<dbReference type="NCBIfam" id="TIGR03675">
    <property type="entry name" value="arCOG00543"/>
    <property type="match status" value="1"/>
</dbReference>
<dbReference type="PANTHER" id="PTHR11203:SF51">
    <property type="entry name" value="CLEAVAGE AND POLYADENYLATION SPECIFICITY FACTOR"/>
    <property type="match status" value="1"/>
</dbReference>
<dbReference type="PANTHER" id="PTHR11203">
    <property type="entry name" value="CLEAVAGE AND POLYADENYLATION SPECIFICITY FACTOR FAMILY MEMBER"/>
    <property type="match status" value="1"/>
</dbReference>
<dbReference type="Pfam" id="PF10996">
    <property type="entry name" value="Beta-Casp"/>
    <property type="match status" value="1"/>
</dbReference>
<dbReference type="Pfam" id="PF17214">
    <property type="entry name" value="KH_TffA"/>
    <property type="match status" value="1"/>
</dbReference>
<dbReference type="Pfam" id="PF16661">
    <property type="entry name" value="Lactamase_B_6"/>
    <property type="match status" value="1"/>
</dbReference>
<dbReference type="Pfam" id="PF07521">
    <property type="entry name" value="RMMBL"/>
    <property type="match status" value="1"/>
</dbReference>
<dbReference type="SMART" id="SM01027">
    <property type="entry name" value="Beta-Casp"/>
    <property type="match status" value="1"/>
</dbReference>
<dbReference type="SMART" id="SM00322">
    <property type="entry name" value="KH"/>
    <property type="match status" value="1"/>
</dbReference>
<dbReference type="SMART" id="SM00849">
    <property type="entry name" value="Lactamase_B"/>
    <property type="match status" value="1"/>
</dbReference>
<dbReference type="SUPFAM" id="SSF56281">
    <property type="entry name" value="Metallo-hydrolase/oxidoreductase"/>
    <property type="match status" value="1"/>
</dbReference>
<dbReference type="SUPFAM" id="SSF54814">
    <property type="entry name" value="Prokaryotic type KH domain (KH-domain type II)"/>
    <property type="match status" value="1"/>
</dbReference>
<sequence>MIKRETQVDQILKDIRGIVNQMVPREAKITEIEFEGPELVIYVKNPEAIMKDGELIKDLAKVLKKRISIRPDPDVLLPPEEAEKLIFEIVPKEAEITNIAFDPSVGEVLIEAKKPGLVIGKNGETLRLITQKVKWAPKVVRTPPLQSQTIYSIRQILQSESKDRRKFLRQVGRNIYRKPEYKSRWIRITGLGGFREVGRSALLVQTDESYVLVDFGVNVAALNDPYKAFPHFDAPEFQYVLKEGLLDAIIITHAHLDHSGMLPYLFRYNLFDGPIYTTPPTRDLMVLLQKDFIEIQQSNGQDPLYRPRDIKEVIKHTITLDYGEVRDISPDIRLTLHNAGHILGSAIVHLHIGNGLHNIAITGDFKFIPTRLLEPANAKFPRLETLVMESTYGGANDIQMPREEAEKRLIEVIHQTLKRGGKVLIPAMAVGRAQEVMMVLEDYARIGAIDAPIYLDGMIWEATAIHTAYPEYLSRRLREQIFKEGYNPFLSEIFHPVANSKERQDIIDSNEPAIIIASSGMLVGGPSVEYFKQLAPDPRNSIIFVSYQAEGTLGRQVQSGVREIPMVGEEGRTEVIKVNMEVHTIDGFSGHADRRELMNYVAKVRPRPERVITVHGEPQKCLDLATSIHRKFGLSTRAPNNLDTIRLR</sequence>
<comment type="function">
    <text evidence="1">Terminates transcription on the whole genome. Termination is linked to FttA-mediated RNA cleavage and does not require NTP hydrolysis. Cleaves endonucleolytically at the RNA exit channel of RNA polymerase (RNAP); the 5'-3' exonuclease activity of this protein degrades the nascent RNA released from RNAP.</text>
</comment>
<comment type="function">
    <text evidence="2">A single-stranded endoribonuclease (endoRNase) with a preference for cleavage at CA dinucleotides (PubMed:23222134). Has 5'-3' exoribonuclease (exoRNase) activity on 5'-monophosphorylated RNA; this activity does not occur on 5'-tri-phosphorylated or 5'-OH substrates (PubMed:23222134). Also has weak activity 5'-3' exodeoxyribonuclease activity on ssDNA (PubMed:23222134).</text>
</comment>
<comment type="cofactor">
    <cofactor evidence="1 5">
        <name>Zn(2+)</name>
        <dbReference type="ChEBI" id="CHEBI:29105"/>
    </cofactor>
    <text evidence="1">Binds 2 Zn(2+) ions, which are required for nuclease activity.</text>
</comment>
<comment type="activity regulation">
    <text evidence="2">EndoRNase activity is inhibited by 1,10-phenanthroline (PubMed:23222134).</text>
</comment>
<comment type="subunit">
    <text evidence="1 2">Homodimer (PubMed:23222134). Interacts with RNA polymerase (RNAP), interacts with the Spt4-Spt5 complex.</text>
</comment>
<comment type="domain">
    <text evidence="2">The 2 KH-domain containing N-terminus is not required for dimerization; its removal leads to loss of cleavage at some sites and destabilizes protein-RNA complexes (PubMed:23222134). The extreme C-terminus is required for dimerization (PubMed:23222134).</text>
</comment>
<comment type="similarity">
    <text evidence="1">Belongs to the metallo-beta-lactamase superfamily. RNA-metabolizing metallo-beta-lactamase-like family. FttA subfamily.</text>
</comment>
<comment type="sequence caution" evidence="4">
    <conflict type="erroneous initiation">
        <sequence resource="EMBL-CDS" id="CAB49663"/>
    </conflict>
    <text>Extended N-terminus.</text>
</comment>
<reference evidence="6" key="1">
    <citation type="journal article" date="2003" name="Mol. Microbiol.">
        <title>An integrated analysis of the genome of the hyperthermophilic archaeon Pyrococcus abyssi.</title>
        <authorList>
            <person name="Cohen G.N."/>
            <person name="Barbe V."/>
            <person name="Flament D."/>
            <person name="Galperin M."/>
            <person name="Heilig R."/>
            <person name="Lecompte O."/>
            <person name="Poch O."/>
            <person name="Prieur D."/>
            <person name="Querellou J."/>
            <person name="Ripp R."/>
            <person name="Thierry J.-C."/>
            <person name="Van der Oost J."/>
            <person name="Weissenbach J."/>
            <person name="Zivanovic Y."/>
            <person name="Forterre P."/>
        </authorList>
    </citation>
    <scope>NUCLEOTIDE SEQUENCE [LARGE SCALE GENOMIC DNA]</scope>
    <source>
        <strain>GE5 / Orsay</strain>
    </source>
</reference>
<reference evidence="7" key="2">
    <citation type="journal article" date="2012" name="Curr. Microbiol.">
        <title>Re-annotation of two hyperthermophilic archaea Pyrococcus abyssi GE5 and Pyrococcus furiosus DSM 3638.</title>
        <authorList>
            <person name="Gao J."/>
            <person name="Wang J."/>
        </authorList>
    </citation>
    <scope>GENOME REANNOTATION</scope>
    <scope>SEQUENCE REVISION TO N-TERMINUS</scope>
    <source>
        <strain evidence="8">GE5 / Orsay</strain>
    </source>
</reference>
<reference key="3">
    <citation type="journal article" date="2013" name="Nucleic Acids Res.">
        <title>Archaeal beta-CASP ribonucleases of the aCPSF1 family are orthologs of the eukaryal CPSF-73 factor.</title>
        <authorList>
            <person name="Phung D.K."/>
            <person name="Rinaldi D."/>
            <person name="Langendijk-Genevaux P.S."/>
            <person name="Quentin Y."/>
            <person name="Carpousis A.J."/>
            <person name="Clouet-d'Orval B."/>
        </authorList>
    </citation>
    <scope>FUNCTION AS AN ENDORIBONUCLEASE</scope>
    <scope>FUNCTION AS AN EXORIBONUCLEASE</scope>
    <scope>PROBABLE COFACTOR</scope>
    <scope>CATALYTIC ACTIVITY</scope>
    <scope>ACTIVITY REGULATION</scope>
    <scope>SUBUNIT</scope>
    <scope>DOMAIN</scope>
    <scope>RNA-BINDING</scope>
    <scope>MUTAGENESIS OF HIS-258; HIS-591 AND 637-ARG--ARG-648</scope>
    <source>
        <strain>GE5 / Orsay</strain>
    </source>
</reference>
<proteinExistence type="evidence at protein level"/>
<gene>
    <name evidence="1" type="primary">fttA</name>
    <name evidence="4" type="ordered locus">PYRAB07490</name>
    <name evidence="6 7" type="ORF">PAB1868</name>
</gene>
<feature type="chain" id="PRO_0000460393" description="Transcription termination factor FttA">
    <location>
        <begin position="1"/>
        <end position="648"/>
    </location>
</feature>
<feature type="region of interest" description="Not required for dimerization, required for cleavage at some sites" evidence="2">
    <location>
        <begin position="1"/>
        <end position="179"/>
    </location>
</feature>
<feature type="region of interest" description="KHa" evidence="1">
    <location>
        <begin position="9"/>
        <end position="76"/>
    </location>
</feature>
<feature type="region of interest" description="KHb" evidence="1">
    <location>
        <begin position="77"/>
        <end position="144"/>
    </location>
</feature>
<feature type="region of interest" description="Metallo-beta-lactamase N-terminus" evidence="1">
    <location>
        <begin position="185"/>
        <end position="395"/>
    </location>
</feature>
<feature type="region of interest" description="Beta-Casp" evidence="1">
    <location>
        <begin position="396"/>
        <end position="589"/>
    </location>
</feature>
<feature type="region of interest" description="Metallo-beta-lactamase C-terminus" evidence="1">
    <location>
        <begin position="590"/>
        <end position="648"/>
    </location>
</feature>
<feature type="binding site" evidence="1">
    <location>
        <position position="253"/>
    </location>
    <ligand>
        <name>Zn(2+)</name>
        <dbReference type="ChEBI" id="CHEBI:29105"/>
        <label>1</label>
    </ligand>
</feature>
<feature type="binding site" evidence="1">
    <location>
        <position position="255"/>
    </location>
    <ligand>
        <name>Zn(2+)</name>
        <dbReference type="ChEBI" id="CHEBI:29105"/>
        <label>1</label>
    </ligand>
</feature>
<feature type="binding site" evidence="1">
    <location>
        <position position="257"/>
    </location>
    <ligand>
        <name>Zn(2+)</name>
        <dbReference type="ChEBI" id="CHEBI:29105"/>
        <label>2</label>
    </ligand>
</feature>
<feature type="binding site" evidence="1">
    <location>
        <position position="258"/>
    </location>
    <ligand>
        <name>Zn(2+)</name>
        <dbReference type="ChEBI" id="CHEBI:29105"/>
        <label>2</label>
    </ligand>
</feature>
<feature type="binding site" evidence="1">
    <location>
        <position position="341"/>
    </location>
    <ligand>
        <name>Zn(2+)</name>
        <dbReference type="ChEBI" id="CHEBI:29105"/>
        <label>1</label>
    </ligand>
</feature>
<feature type="binding site" evidence="1">
    <location>
        <position position="364"/>
    </location>
    <ligand>
        <name>Zn(2+)</name>
        <dbReference type="ChEBI" id="CHEBI:29105"/>
        <label>1</label>
    </ligand>
</feature>
<feature type="binding site" evidence="1">
    <location>
        <position position="364"/>
    </location>
    <ligand>
        <name>Zn(2+)</name>
        <dbReference type="ChEBI" id="CHEBI:29105"/>
        <label>2</label>
    </ligand>
</feature>
<feature type="binding site" evidence="1">
    <location>
        <position position="615"/>
    </location>
    <ligand>
        <name>Zn(2+)</name>
        <dbReference type="ChEBI" id="CHEBI:29105"/>
        <label>2</label>
    </ligand>
</feature>
<feature type="mutagenesis site" description="Significant decrease of endoRNase activity." evidence="2">
    <original>H</original>
    <variation>A</variation>
    <location>
        <position position="258"/>
    </location>
</feature>
<feature type="mutagenesis site" description="Significant decrease of endoRNase activity." evidence="2">
    <original>H</original>
    <variation>A</variation>
    <location>
        <position position="591"/>
    </location>
</feature>
<feature type="mutagenesis site" description="Protein is no longer dimeric, weaker endoRNase activity, loss of exoRNase activity, severely impaired RNA binding." evidence="2">
    <location>
        <begin position="637"/>
        <end position="648"/>
    </location>
</feature>
<accession>Q9V0P0</accession>
<accession>G8ZGV0</accession>
<evidence type="ECO:0000255" key="1">
    <source>
        <dbReference type="HAMAP-Rule" id="MF_00870"/>
    </source>
</evidence>
<evidence type="ECO:0000269" key="2">
    <source>
    </source>
</evidence>
<evidence type="ECO:0000303" key="3">
    <source>
    </source>
</evidence>
<evidence type="ECO:0000305" key="4"/>
<evidence type="ECO:0000305" key="5">
    <source>
    </source>
</evidence>
<evidence type="ECO:0000312" key="6">
    <source>
        <dbReference type="EMBL" id="CAB49663.1"/>
    </source>
</evidence>
<evidence type="ECO:0000312" key="7">
    <source>
        <dbReference type="EMBL" id="CCE70145.1"/>
    </source>
</evidence>
<evidence type="ECO:0000312" key="8">
    <source>
        <dbReference type="Proteomes" id="UP000009139"/>
    </source>
</evidence>